<reference key="1">
    <citation type="journal article" date="2012" name="PLoS ONE">
        <title>Characterization of profilin polymorphism in pollen with a focus on multifunctionality.</title>
        <authorList>
            <person name="Jimenez-Lopez J.C."/>
            <person name="Morales S."/>
            <person name="Castro A.J."/>
            <person name="Volkmann D."/>
            <person name="Rodriguez-Garcia M.I."/>
            <person name="Alche Jde D."/>
        </authorList>
    </citation>
    <scope>NUCLEOTIDE SEQUENCE [MRNA]</scope>
    <scope>POLYMORPHISM</scope>
    <source>
        <strain>cv. Acebuche</strain>
    </source>
</reference>
<reference key="2">
    <citation type="journal article" date="2013" name="PLoS ONE">
        <title>Analysis of the effects of polymorphism on pollen profilin structural functionality and the generation of conformational, T- and B-cell epitopes.</title>
        <authorList>
            <person name="Jimenez-Lopez J.C."/>
            <person name="Rodriguez-Garcia M.I."/>
            <person name="Alche J.D."/>
        </authorList>
    </citation>
    <scope>3D-STRUCTURE MODELING</scope>
    <scope>DISULFIDE BOND</scope>
</reference>
<dbReference type="EMBL" id="DQ138357">
    <property type="protein sequence ID" value="AAZ30435.1"/>
    <property type="molecule type" value="mRNA"/>
</dbReference>
<dbReference type="SMR" id="A4GDT9"/>
<dbReference type="Allergome" id="490">
    <property type="allergen name" value="Ole e 2"/>
</dbReference>
<dbReference type="GO" id="GO:0005938">
    <property type="term" value="C:cell cortex"/>
    <property type="evidence" value="ECO:0007669"/>
    <property type="project" value="TreeGrafter"/>
</dbReference>
<dbReference type="GO" id="GO:0005856">
    <property type="term" value="C:cytoskeleton"/>
    <property type="evidence" value="ECO:0007669"/>
    <property type="project" value="UniProtKB-SubCell"/>
</dbReference>
<dbReference type="GO" id="GO:0003785">
    <property type="term" value="F:actin monomer binding"/>
    <property type="evidence" value="ECO:0007669"/>
    <property type="project" value="TreeGrafter"/>
</dbReference>
<dbReference type="CDD" id="cd00148">
    <property type="entry name" value="PROF"/>
    <property type="match status" value="1"/>
</dbReference>
<dbReference type="FunFam" id="3.30.450.30:FF:000001">
    <property type="entry name" value="Profilin"/>
    <property type="match status" value="1"/>
</dbReference>
<dbReference type="Gene3D" id="3.30.450.30">
    <property type="entry name" value="Dynein light chain 2a, cytoplasmic"/>
    <property type="match status" value="1"/>
</dbReference>
<dbReference type="InterPro" id="IPR048278">
    <property type="entry name" value="PFN"/>
</dbReference>
<dbReference type="InterPro" id="IPR005455">
    <property type="entry name" value="PFN_euk"/>
</dbReference>
<dbReference type="InterPro" id="IPR036140">
    <property type="entry name" value="PFN_sf"/>
</dbReference>
<dbReference type="InterPro" id="IPR027310">
    <property type="entry name" value="Profilin_CS"/>
</dbReference>
<dbReference type="PANTHER" id="PTHR11604">
    <property type="entry name" value="PROFILIN"/>
    <property type="match status" value="1"/>
</dbReference>
<dbReference type="PANTHER" id="PTHR11604:SF25">
    <property type="entry name" value="PROFILIN-5"/>
    <property type="match status" value="1"/>
</dbReference>
<dbReference type="Pfam" id="PF00235">
    <property type="entry name" value="Profilin"/>
    <property type="match status" value="1"/>
</dbReference>
<dbReference type="PRINTS" id="PR00392">
    <property type="entry name" value="PROFILIN"/>
</dbReference>
<dbReference type="PRINTS" id="PR01640">
    <property type="entry name" value="PROFILINPLNT"/>
</dbReference>
<dbReference type="SMART" id="SM00392">
    <property type="entry name" value="PROF"/>
    <property type="match status" value="1"/>
</dbReference>
<dbReference type="SUPFAM" id="SSF55770">
    <property type="entry name" value="Profilin (actin-binding protein)"/>
    <property type="match status" value="1"/>
</dbReference>
<dbReference type="PROSITE" id="PS00414">
    <property type="entry name" value="PROFILIN"/>
    <property type="match status" value="1"/>
</dbReference>
<name>PROBI_OLEEU</name>
<feature type="initiator methionine" description="Removed" evidence="1">
    <location>
        <position position="1"/>
    </location>
</feature>
<feature type="chain" id="PRO_0000425026" description="Profilin-2">
    <location>
        <begin position="2"/>
        <end position="134"/>
    </location>
</feature>
<feature type="short sequence motif" description="Involved in PIP2 interaction">
    <location>
        <begin position="84"/>
        <end position="100"/>
    </location>
</feature>
<feature type="modified residue" description="Phosphothreonine" evidence="1">
    <location>
        <position position="114"/>
    </location>
</feature>
<feature type="disulfide bond" evidence="3">
    <location>
        <begin position="13"/>
        <end position="118"/>
    </location>
</feature>
<organism>
    <name type="scientific">Olea europaea</name>
    <name type="common">Common olive</name>
    <dbReference type="NCBI Taxonomy" id="4146"/>
    <lineage>
        <taxon>Eukaryota</taxon>
        <taxon>Viridiplantae</taxon>
        <taxon>Streptophyta</taxon>
        <taxon>Embryophyta</taxon>
        <taxon>Tracheophyta</taxon>
        <taxon>Spermatophyta</taxon>
        <taxon>Magnoliopsida</taxon>
        <taxon>eudicotyledons</taxon>
        <taxon>Gunneridae</taxon>
        <taxon>Pentapetalae</taxon>
        <taxon>asterids</taxon>
        <taxon>lamiids</taxon>
        <taxon>Lamiales</taxon>
        <taxon>Oleaceae</taxon>
        <taxon>Oleeae</taxon>
        <taxon>Olea</taxon>
    </lineage>
</organism>
<proteinExistence type="evidence at protein level"/>
<evidence type="ECO:0000250" key="1"/>
<evidence type="ECO:0000305" key="2"/>
<evidence type="ECO:0000305" key="3">
    <source>
    </source>
</evidence>
<sequence>MSWQAYVDDHLMCDIEGHEGHRLTAAAIVGHDGSVWAQSATFPQFKPEEMNGITTDFNEPGHLAPTGLHLGGTKYMVIQGEAGAVIRGKKGSGGITIKKTGQALVCGIYEEPVTPGQCNMVVERLGDYLLEQGL</sequence>
<keyword id="KW-0009">Actin-binding</keyword>
<keyword id="KW-0020">Allergen</keyword>
<keyword id="KW-0963">Cytoplasm</keyword>
<keyword id="KW-0206">Cytoskeleton</keyword>
<keyword id="KW-1015">Disulfide bond</keyword>
<keyword id="KW-0597">Phosphoprotein</keyword>
<protein>
    <recommendedName>
        <fullName>Profilin-2</fullName>
    </recommendedName>
    <alternativeName>
        <fullName>Pollen allergen Ole e 2</fullName>
    </alternativeName>
    <allergenName>Ole e 2</allergenName>
</protein>
<comment type="function">
    <text evidence="1">Binds to actin and affects the structure of the cytoskeleton. At high concentrations, profilin prevents the polymerization of actin, whereas it enhances it at low concentrations (By similarity).</text>
</comment>
<comment type="subunit">
    <text evidence="1">Occurs in many kinds of cells as a complex with monomeric actin in a 1:1 ratio.</text>
</comment>
<comment type="subcellular location">
    <subcellularLocation>
        <location evidence="1">Cytoplasm</location>
        <location evidence="1">Cytoskeleton</location>
    </subcellularLocation>
</comment>
<comment type="PTM">
    <text evidence="1">Phosphorylated by MAP kinases.</text>
</comment>
<comment type="polymorphism">
    <text>Several isoforms of the allergen exist due to polymorphism.</text>
</comment>
<comment type="allergen">
    <text>Causes an allergic reaction in human.</text>
</comment>
<comment type="miscellaneous">
    <text evidence="3">The variability of the residues taking part of IgE-binding epitopes might be responsible of the difference in cross-reactivity among olive pollen cultivars, and between distantly related pollen species, leading to a variable range of allergy reactions among atopic patients.</text>
</comment>
<comment type="similarity">
    <text evidence="2">Belongs to the profilin family.</text>
</comment>
<accession>A4GDT9</accession>